<sequence>MSKSNPNKQSVELNRTSLYWGLLLIFVLAVLFSSYIFN</sequence>
<feature type="chain" id="PRO_0000296331" description="Photosystem II reaction center protein L">
    <location>
        <begin position="1"/>
        <end position="38"/>
    </location>
</feature>
<feature type="transmembrane region" description="Helical" evidence="1">
    <location>
        <begin position="17"/>
        <end position="37"/>
    </location>
</feature>
<proteinExistence type="inferred from homology"/>
<dbReference type="EMBL" id="DQ851108">
    <property type="protein sequence ID" value="ABG91446.1"/>
    <property type="molecule type" value="Genomic_DNA"/>
</dbReference>
<dbReference type="RefSeq" id="YP_778614.1">
    <property type="nucleotide sequence ID" value="NC_008408.1"/>
</dbReference>
<dbReference type="SMR" id="Q06J13"/>
<dbReference type="GeneID" id="4353031"/>
<dbReference type="GO" id="GO:0009535">
    <property type="term" value="C:chloroplast thylakoid membrane"/>
    <property type="evidence" value="ECO:0007669"/>
    <property type="project" value="UniProtKB-SubCell"/>
</dbReference>
<dbReference type="GO" id="GO:0009539">
    <property type="term" value="C:photosystem II reaction center"/>
    <property type="evidence" value="ECO:0007669"/>
    <property type="project" value="InterPro"/>
</dbReference>
<dbReference type="GO" id="GO:0015979">
    <property type="term" value="P:photosynthesis"/>
    <property type="evidence" value="ECO:0007669"/>
    <property type="project" value="UniProtKB-UniRule"/>
</dbReference>
<dbReference type="HAMAP" id="MF_01317">
    <property type="entry name" value="PSII_PsbL"/>
    <property type="match status" value="1"/>
</dbReference>
<dbReference type="InterPro" id="IPR003372">
    <property type="entry name" value="PSII_PsbL"/>
</dbReference>
<dbReference type="InterPro" id="IPR037266">
    <property type="entry name" value="PSII_PsbL_sf"/>
</dbReference>
<dbReference type="NCBIfam" id="NF001972">
    <property type="entry name" value="PRK00753.1"/>
    <property type="match status" value="1"/>
</dbReference>
<dbReference type="Pfam" id="PF02419">
    <property type="entry name" value="PsbL"/>
    <property type="match status" value="1"/>
</dbReference>
<dbReference type="SUPFAM" id="SSF161017">
    <property type="entry name" value="Photosystem II reaction center protein L, PsbL"/>
    <property type="match status" value="1"/>
</dbReference>
<protein>
    <recommendedName>
        <fullName evidence="1">Photosystem II reaction center protein L</fullName>
        <shortName evidence="1">PSII-L</shortName>
    </recommendedName>
</protein>
<evidence type="ECO:0000255" key="1">
    <source>
        <dbReference type="HAMAP-Rule" id="MF_01317"/>
    </source>
</evidence>
<evidence type="ECO:0000305" key="2"/>
<accession>Q06J13</accession>
<name>PSBL_BIGNA</name>
<organism>
    <name type="scientific">Bigelowiella natans</name>
    <name type="common">Pedinomonas minutissima</name>
    <name type="synonym">Chlorarachnion sp. (strain CCMP621)</name>
    <dbReference type="NCBI Taxonomy" id="227086"/>
    <lineage>
        <taxon>Eukaryota</taxon>
        <taxon>Sar</taxon>
        <taxon>Rhizaria</taxon>
        <taxon>Cercozoa</taxon>
        <taxon>Chlorarachniophyceae</taxon>
        <taxon>Bigelowiella</taxon>
    </lineage>
</organism>
<keyword id="KW-0150">Chloroplast</keyword>
<keyword id="KW-0472">Membrane</keyword>
<keyword id="KW-0602">Photosynthesis</keyword>
<keyword id="KW-0604">Photosystem II</keyword>
<keyword id="KW-0934">Plastid</keyword>
<keyword id="KW-0674">Reaction center</keyword>
<keyword id="KW-0793">Thylakoid</keyword>
<keyword id="KW-0812">Transmembrane</keyword>
<keyword id="KW-1133">Transmembrane helix</keyword>
<gene>
    <name evidence="1" type="primary">psbL</name>
</gene>
<geneLocation type="chloroplast"/>
<comment type="function">
    <text evidence="1">One of the components of the core complex of photosystem II (PSII). PSII is a light-driven water:plastoquinone oxidoreductase that uses light energy to abstract electrons from H(2)O, generating O(2) and a proton gradient subsequently used for ATP formation. It consists of a core antenna complex that captures photons, and an electron transfer chain that converts photonic excitation into a charge separation. This subunit is found at the monomer-monomer interface and is required for correct PSII assembly and/or dimerization.</text>
</comment>
<comment type="subunit">
    <text evidence="2">PSII is composed of 1 copy each of membrane proteins PsbA, PsbB, PsbC, PsbD, PsbE, PsbF, PsbH, PsbI, PsbJ, PsbK, PsbL, PsbM, PsbT, PsbY, PsbZ, Psb30/Ycf12, at least 3 peripheral proteins of the oxygen-evolving complex and a large number of cofactors. It forms dimeric complexes.</text>
</comment>
<comment type="subcellular location">
    <subcellularLocation>
        <location evidence="1">Plastid</location>
        <location evidence="1">Chloroplast thylakoid membrane</location>
        <topology evidence="1">Single-pass membrane protein</topology>
    </subcellularLocation>
</comment>
<comment type="similarity">
    <text evidence="1">Belongs to the PsbL family.</text>
</comment>
<reference key="1">
    <citation type="journal article" date="2007" name="Mol. Biol. Evol.">
        <title>The complete chloroplast genome of the chlorarachniophyte Bigelowiella natans: evidence for independent origins of chlorarachniophyte and euglenid secondary endosymbionts.</title>
        <authorList>
            <person name="Rogers M.B."/>
            <person name="Gilson P.R."/>
            <person name="Su V."/>
            <person name="McFadden G.I."/>
            <person name="Keeling P.J."/>
        </authorList>
    </citation>
    <scope>NUCLEOTIDE SEQUENCE [LARGE SCALE GENOMIC DNA]</scope>
</reference>